<protein>
    <recommendedName>
        <fullName evidence="1">L-fucose isomerase</fullName>
        <ecNumber evidence="1">5.3.1.25</ecNumber>
    </recommendedName>
    <alternativeName>
        <fullName evidence="1">6-deoxy-L-galactose isomerase</fullName>
    </alternativeName>
    <alternativeName>
        <fullName>FucIase</fullName>
    </alternativeName>
</protein>
<evidence type="ECO:0000255" key="1">
    <source>
        <dbReference type="HAMAP-Rule" id="MF_01254"/>
    </source>
</evidence>
<reference key="1">
    <citation type="journal article" date="2010" name="Genome Biol.">
        <title>Structure and dynamics of the pan-genome of Streptococcus pneumoniae and closely related species.</title>
        <authorList>
            <person name="Donati C."/>
            <person name="Hiller N.L."/>
            <person name="Tettelin H."/>
            <person name="Muzzi A."/>
            <person name="Croucher N.J."/>
            <person name="Angiuoli S.V."/>
            <person name="Oggioni M."/>
            <person name="Dunning Hotopp J.C."/>
            <person name="Hu F.Z."/>
            <person name="Riley D.R."/>
            <person name="Covacci A."/>
            <person name="Mitchell T.J."/>
            <person name="Bentley S.D."/>
            <person name="Kilian M."/>
            <person name="Ehrlich G.D."/>
            <person name="Rappuoli R."/>
            <person name="Moxon E.R."/>
            <person name="Masignani V."/>
        </authorList>
    </citation>
    <scope>NUCLEOTIDE SEQUENCE [LARGE SCALE GENOMIC DNA]</scope>
    <source>
        <strain>Taiwan19F-14</strain>
    </source>
</reference>
<name>FUCI_STRZT</name>
<proteinExistence type="inferred from homology"/>
<sequence>MIQHPRIGIRPTIDGRRQGVRESLEVQTMNMAKSVADLISSTLKYPDGEPVECVISPSTIGRVPEAAASHELFKKSNVCATITVTPCWCYGSETMDMSPDIPHAIWGFNGTERPGAVYLAAVLASHAQKGIPAFGIYGRDVQEASDTAIPEDVKEKLLRYARAALATGLMRDTAYLSMGSVSMGIGGSIVNPDFFQEYLGMRNESVDMTEFTRRMDRGIYDPEEFERAMVWVKEHIKEGVDRNREDLILSKEEKEKQWEFVIKMFMIGRDLMVGNPRLAELGFEEEAVGHHALVAGFQGQRQWTDHFPNGDFMETFLNTQFDWNGIRKPFVFATENDSLNGVSMLFNYLLTNTPQIFADVRTYWSPEAVKRVTGHTLEGCAAAGFLHLINSGSCTLDGTGQATRDGKPVMKPFWELDESEVQAMLENTDFPPANREYFRGGGFSTRFLTKGDMPVTMVRLNLLKGVGPVLQIAEGYTLELPEDVHHTLDNRTDPGWPTTWFAPRLTGKGAFKSVYDVMNNWGANHGAITYGHIGADLITLASMLRIPVNMHNVPEEDIFRPKNWSLFGTEDLESADYRACQLLGPLHK</sequence>
<dbReference type="EC" id="5.3.1.25" evidence="1"/>
<dbReference type="EMBL" id="CP000921">
    <property type="protein sequence ID" value="ACO22340.1"/>
    <property type="molecule type" value="Genomic_DNA"/>
</dbReference>
<dbReference type="RefSeq" id="WP_000614263.1">
    <property type="nucleotide sequence ID" value="NC_012469.1"/>
</dbReference>
<dbReference type="SMR" id="C1CU77"/>
<dbReference type="KEGG" id="snt:SPT_2171"/>
<dbReference type="HOGENOM" id="CLU_033326_1_0_9"/>
<dbReference type="UniPathway" id="UPA00563">
    <property type="reaction ID" value="UER00624"/>
</dbReference>
<dbReference type="GO" id="GO:0005737">
    <property type="term" value="C:cytoplasm"/>
    <property type="evidence" value="ECO:0007669"/>
    <property type="project" value="UniProtKB-SubCell"/>
</dbReference>
<dbReference type="GO" id="GO:0008790">
    <property type="term" value="F:arabinose isomerase activity"/>
    <property type="evidence" value="ECO:0007669"/>
    <property type="project" value="TreeGrafter"/>
</dbReference>
<dbReference type="GO" id="GO:0008736">
    <property type="term" value="F:L-fucose isomerase activity"/>
    <property type="evidence" value="ECO:0007669"/>
    <property type="project" value="UniProtKB-UniRule"/>
</dbReference>
<dbReference type="GO" id="GO:0030145">
    <property type="term" value="F:manganese ion binding"/>
    <property type="evidence" value="ECO:0007669"/>
    <property type="project" value="UniProtKB-UniRule"/>
</dbReference>
<dbReference type="GO" id="GO:0019571">
    <property type="term" value="P:D-arabinose catabolic process"/>
    <property type="evidence" value="ECO:0007669"/>
    <property type="project" value="TreeGrafter"/>
</dbReference>
<dbReference type="GO" id="GO:0042355">
    <property type="term" value="P:L-fucose catabolic process"/>
    <property type="evidence" value="ECO:0007669"/>
    <property type="project" value="UniProtKB-UniRule"/>
</dbReference>
<dbReference type="CDD" id="cd03556">
    <property type="entry name" value="L-fucose_isomerase"/>
    <property type="match status" value="1"/>
</dbReference>
<dbReference type="FunFam" id="3.20.14.10:FF:000001">
    <property type="entry name" value="L-fucose isomerase"/>
    <property type="match status" value="1"/>
</dbReference>
<dbReference type="FunFam" id="3.40.50.1070:FF:000001">
    <property type="entry name" value="L-fucose isomerase"/>
    <property type="match status" value="1"/>
</dbReference>
<dbReference type="Gene3D" id="3.40.50.1070">
    <property type="match status" value="1"/>
</dbReference>
<dbReference type="Gene3D" id="3.40.275.10">
    <property type="entry name" value="L-fucose Isomerase, Chain A, domain 2"/>
    <property type="match status" value="1"/>
</dbReference>
<dbReference type="Gene3D" id="3.20.14.10">
    <property type="entry name" value="L-fucose/L-arabinose isomerase, C-terminal"/>
    <property type="match status" value="1"/>
</dbReference>
<dbReference type="HAMAP" id="MF_01254">
    <property type="entry name" value="Fucose_iso"/>
    <property type="match status" value="1"/>
</dbReference>
<dbReference type="InterPro" id="IPR004216">
    <property type="entry name" value="Fuc/Ara_isomerase_C"/>
</dbReference>
<dbReference type="InterPro" id="IPR038393">
    <property type="entry name" value="Fuc_iso_dom3_sf"/>
</dbReference>
<dbReference type="InterPro" id="IPR015888">
    <property type="entry name" value="Fuc_isomerase_C"/>
</dbReference>
<dbReference type="InterPro" id="IPR038391">
    <property type="entry name" value="Fucose_iso_dom1_sf"/>
</dbReference>
<dbReference type="InterPro" id="IPR012888">
    <property type="entry name" value="Fucose_iso_N1"/>
</dbReference>
<dbReference type="InterPro" id="IPR005763">
    <property type="entry name" value="Fucose_isomerase"/>
</dbReference>
<dbReference type="InterPro" id="IPR038392">
    <property type="entry name" value="Fucose_isomerase_dom2_sf"/>
</dbReference>
<dbReference type="InterPro" id="IPR009015">
    <property type="entry name" value="Fucose_isomerase_N/cen_sf"/>
</dbReference>
<dbReference type="InterPro" id="IPR012889">
    <property type="entry name" value="Fucose_isomerase_N2"/>
</dbReference>
<dbReference type="NCBIfam" id="TIGR01089">
    <property type="entry name" value="fucI"/>
    <property type="match status" value="1"/>
</dbReference>
<dbReference type="NCBIfam" id="NF008220">
    <property type="entry name" value="PRK10991.1"/>
    <property type="match status" value="1"/>
</dbReference>
<dbReference type="PANTHER" id="PTHR37840">
    <property type="entry name" value="L-FUCOSE ISOMERASE"/>
    <property type="match status" value="1"/>
</dbReference>
<dbReference type="PANTHER" id="PTHR37840:SF1">
    <property type="entry name" value="L-FUCOSE ISOMERASE"/>
    <property type="match status" value="1"/>
</dbReference>
<dbReference type="Pfam" id="PF02952">
    <property type="entry name" value="Fucose_iso_C"/>
    <property type="match status" value="1"/>
</dbReference>
<dbReference type="Pfam" id="PF07881">
    <property type="entry name" value="Fucose_iso_N1"/>
    <property type="match status" value="1"/>
</dbReference>
<dbReference type="Pfam" id="PF07882">
    <property type="entry name" value="Fucose_iso_N2"/>
    <property type="match status" value="1"/>
</dbReference>
<dbReference type="SUPFAM" id="SSF50443">
    <property type="entry name" value="FucI/AraA C-terminal domain-like"/>
    <property type="match status" value="1"/>
</dbReference>
<dbReference type="SUPFAM" id="SSF53743">
    <property type="entry name" value="FucI/AraA N-terminal and middle domains"/>
    <property type="match status" value="1"/>
</dbReference>
<accession>C1CU77</accession>
<feature type="chain" id="PRO_1000165101" description="L-fucose isomerase">
    <location>
        <begin position="1"/>
        <end position="588"/>
    </location>
</feature>
<feature type="active site" description="Proton acceptor" evidence="1">
    <location>
        <position position="335"/>
    </location>
</feature>
<feature type="active site" description="Proton acceptor" evidence="1">
    <location>
        <position position="359"/>
    </location>
</feature>
<feature type="binding site" evidence="1">
    <location>
        <position position="335"/>
    </location>
    <ligand>
        <name>Mn(2+)</name>
        <dbReference type="ChEBI" id="CHEBI:29035"/>
    </ligand>
</feature>
<feature type="binding site" evidence="1">
    <location>
        <position position="359"/>
    </location>
    <ligand>
        <name>Mn(2+)</name>
        <dbReference type="ChEBI" id="CHEBI:29035"/>
    </ligand>
</feature>
<feature type="binding site" evidence="1">
    <location>
        <position position="525"/>
    </location>
    <ligand>
        <name>Mn(2+)</name>
        <dbReference type="ChEBI" id="CHEBI:29035"/>
    </ligand>
</feature>
<keyword id="KW-0119">Carbohydrate metabolism</keyword>
<keyword id="KW-0963">Cytoplasm</keyword>
<keyword id="KW-0294">Fucose metabolism</keyword>
<keyword id="KW-0413">Isomerase</keyword>
<keyword id="KW-0464">Manganese</keyword>
<keyword id="KW-0479">Metal-binding</keyword>
<organism>
    <name type="scientific">Streptococcus pneumoniae (strain Taiwan19F-14)</name>
    <dbReference type="NCBI Taxonomy" id="487213"/>
    <lineage>
        <taxon>Bacteria</taxon>
        <taxon>Bacillati</taxon>
        <taxon>Bacillota</taxon>
        <taxon>Bacilli</taxon>
        <taxon>Lactobacillales</taxon>
        <taxon>Streptococcaceae</taxon>
        <taxon>Streptococcus</taxon>
    </lineage>
</organism>
<comment type="function">
    <text evidence="1">Converts the aldose L-fucose into the corresponding ketose L-fuculose.</text>
</comment>
<comment type="catalytic activity">
    <reaction evidence="1">
        <text>L-fucose = L-fuculose</text>
        <dbReference type="Rhea" id="RHEA:17233"/>
        <dbReference type="ChEBI" id="CHEBI:2181"/>
        <dbReference type="ChEBI" id="CHEBI:17617"/>
        <dbReference type="EC" id="5.3.1.25"/>
    </reaction>
</comment>
<comment type="cofactor">
    <cofactor evidence="1">
        <name>Mn(2+)</name>
        <dbReference type="ChEBI" id="CHEBI:29035"/>
    </cofactor>
</comment>
<comment type="pathway">
    <text evidence="1">Carbohydrate degradation; L-fucose degradation; L-lactaldehyde and glycerone phosphate from L-fucose: step 1/3.</text>
</comment>
<comment type="subcellular location">
    <subcellularLocation>
        <location evidence="1">Cytoplasm</location>
    </subcellularLocation>
</comment>
<comment type="similarity">
    <text evidence="1">Belongs to the L-fucose isomerase family.</text>
</comment>
<gene>
    <name evidence="1" type="primary">fucI</name>
    <name type="ordered locus">SPT_2171</name>
</gene>